<comment type="function">
    <text evidence="1">May play a role in the structure and strength of both muscle and bone.</text>
</comment>
<comment type="subcellular location">
    <subcellularLocation>
        <location evidence="2">Membrane</location>
        <topology evidence="2">Single-pass membrane protein</topology>
    </subcellularLocation>
    <subcellularLocation>
        <location evidence="1">Mitochondrion</location>
    </subcellularLocation>
    <subcellularLocation>
        <location evidence="1">Cytoplasm</location>
    </subcellularLocation>
</comment>
<comment type="similarity">
    <text evidence="4">Belongs to the FAM210 family.</text>
</comment>
<dbReference type="EMBL" id="BC088690">
    <property type="protein sequence ID" value="AAH88690.1"/>
    <property type="molecule type" value="mRNA"/>
</dbReference>
<dbReference type="RefSeq" id="NP_001088884.1">
    <property type="nucleotide sequence ID" value="NM_001095415.1"/>
</dbReference>
<dbReference type="RefSeq" id="XP_018122142.1">
    <property type="nucleotide sequence ID" value="XM_018266653.1"/>
</dbReference>
<dbReference type="RefSeq" id="XP_018122144.1">
    <property type="nucleotide sequence ID" value="XM_018266655.1"/>
</dbReference>
<dbReference type="RefSeq" id="XP_018122145.1">
    <property type="nucleotide sequence ID" value="XM_018266656.1"/>
</dbReference>
<dbReference type="RefSeq" id="XP_018122146.1">
    <property type="nucleotide sequence ID" value="XM_018266657.1"/>
</dbReference>
<dbReference type="SMR" id="Q5M7E0"/>
<dbReference type="DNASU" id="496228"/>
<dbReference type="GeneID" id="496228"/>
<dbReference type="KEGG" id="xla:496228"/>
<dbReference type="AGR" id="Xenbase:XB-GENE-944386"/>
<dbReference type="CTD" id="496228"/>
<dbReference type="Xenbase" id="XB-GENE-944386">
    <property type="gene designation" value="fam210a.L"/>
</dbReference>
<dbReference type="OMA" id="HTWAVRE"/>
<dbReference type="OrthoDB" id="5874039at2759"/>
<dbReference type="Proteomes" id="UP000186698">
    <property type="component" value="Chromosome 6L"/>
</dbReference>
<dbReference type="Bgee" id="496228">
    <property type="expression patterns" value="Expressed in muscle tissue and 19 other cell types or tissues"/>
</dbReference>
<dbReference type="GO" id="GO:0005737">
    <property type="term" value="C:cytoplasm"/>
    <property type="evidence" value="ECO:0000250"/>
    <property type="project" value="UniProtKB"/>
</dbReference>
<dbReference type="GO" id="GO:0016020">
    <property type="term" value="C:membrane"/>
    <property type="evidence" value="ECO:0007669"/>
    <property type="project" value="UniProtKB-SubCell"/>
</dbReference>
<dbReference type="GO" id="GO:0005739">
    <property type="term" value="C:mitochondrion"/>
    <property type="evidence" value="ECO:0000250"/>
    <property type="project" value="UniProtKB"/>
</dbReference>
<dbReference type="Gene3D" id="6.10.140.1430">
    <property type="match status" value="1"/>
</dbReference>
<dbReference type="InterPro" id="IPR045866">
    <property type="entry name" value="FAM210A/B-like"/>
</dbReference>
<dbReference type="InterPro" id="IPR009688">
    <property type="entry name" value="FAM210A/B-like_dom"/>
</dbReference>
<dbReference type="PANTHER" id="PTHR21377:SF1">
    <property type="entry name" value="PROTEIN FAM210A"/>
    <property type="match status" value="1"/>
</dbReference>
<dbReference type="PANTHER" id="PTHR21377">
    <property type="entry name" value="PROTEIN FAM210B, MITOCHONDRIAL"/>
    <property type="match status" value="1"/>
</dbReference>
<dbReference type="Pfam" id="PF06916">
    <property type="entry name" value="FAM210A-B_dom"/>
    <property type="match status" value="1"/>
</dbReference>
<name>F210A_XENLA</name>
<organism>
    <name type="scientific">Xenopus laevis</name>
    <name type="common">African clawed frog</name>
    <dbReference type="NCBI Taxonomy" id="8355"/>
    <lineage>
        <taxon>Eukaryota</taxon>
        <taxon>Metazoa</taxon>
        <taxon>Chordata</taxon>
        <taxon>Craniata</taxon>
        <taxon>Vertebrata</taxon>
        <taxon>Euteleostomi</taxon>
        <taxon>Amphibia</taxon>
        <taxon>Batrachia</taxon>
        <taxon>Anura</taxon>
        <taxon>Pipoidea</taxon>
        <taxon>Pipidae</taxon>
        <taxon>Xenopodinae</taxon>
        <taxon>Xenopus</taxon>
        <taxon>Xenopus</taxon>
    </lineage>
</organism>
<feature type="chain" id="PRO_0000274431" description="Protein FAM210A">
    <location>
        <begin position="1"/>
        <end position="275"/>
    </location>
</feature>
<feature type="transmembrane region" description="Helical" evidence="2">
    <location>
        <begin position="124"/>
        <end position="144"/>
    </location>
</feature>
<feature type="domain" description="DUF1279">
    <location>
        <begin position="105"/>
        <end position="217"/>
    </location>
</feature>
<feature type="region of interest" description="Disordered" evidence="3">
    <location>
        <begin position="51"/>
        <end position="100"/>
    </location>
</feature>
<feature type="coiled-coil region" evidence="2">
    <location>
        <begin position="221"/>
        <end position="275"/>
    </location>
</feature>
<feature type="compositionally biased region" description="Polar residues" evidence="3">
    <location>
        <begin position="56"/>
        <end position="65"/>
    </location>
</feature>
<feature type="compositionally biased region" description="Polar residues" evidence="3">
    <location>
        <begin position="75"/>
        <end position="95"/>
    </location>
</feature>
<accession>Q5M7E0</accession>
<gene>
    <name type="primary">fam210a</name>
</gene>
<keyword id="KW-0175">Coiled coil</keyword>
<keyword id="KW-0963">Cytoplasm</keyword>
<keyword id="KW-0472">Membrane</keyword>
<keyword id="KW-0496">Mitochondrion</keyword>
<keyword id="KW-1185">Reference proteome</keyword>
<keyword id="KW-0812">Transmembrane</keyword>
<keyword id="KW-1133">Transmembrane helix</keyword>
<sequence length="275" mass="31201">MHLLRTLLLRSNTSNISLLTKCSFRASPLHKWPISLRSGSQISLLPTEQKKWLHSQPKQQDTATKTPVHDLPSGIQHQSEETSPSARSSISTDPSSIAEEDPLQDQSIGLLKRFKKTFRQHGKVLIPVHLVTSSIWFGSFYYAAMQGVNVVPFLEYIGLPDGIVNILKNSQGGNALTAYAMYKIATPARYTVTLGGTSVSVKYLRKYGYLSTPPLVKDYFQDRMEETKELFTEKMEETRDIISGKMEETKDRISEKLQETKDRVAFRKKKNEDME</sequence>
<proteinExistence type="evidence at transcript level"/>
<evidence type="ECO:0000250" key="1">
    <source>
        <dbReference type="UniProtKB" id="Q8BGY7"/>
    </source>
</evidence>
<evidence type="ECO:0000255" key="2"/>
<evidence type="ECO:0000256" key="3">
    <source>
        <dbReference type="SAM" id="MobiDB-lite"/>
    </source>
</evidence>
<evidence type="ECO:0000305" key="4"/>
<reference key="1">
    <citation type="submission" date="2004-12" db="EMBL/GenBank/DDBJ databases">
        <authorList>
            <consortium name="NIH - Xenopus Gene Collection (XGC) project"/>
        </authorList>
    </citation>
    <scope>NUCLEOTIDE SEQUENCE [LARGE SCALE MRNA]</scope>
    <source>
        <tissue>Testis</tissue>
    </source>
</reference>
<protein>
    <recommendedName>
        <fullName>Protein FAM210A</fullName>
    </recommendedName>
</protein>